<reference key="1">
    <citation type="journal article" date="2006" name="PLoS Genet.">
        <title>Who ate whom? Adaptive Helicobacter genomic changes that accompanied a host jump from early humans to large felines.</title>
        <authorList>
            <person name="Eppinger M."/>
            <person name="Baar C."/>
            <person name="Linz B."/>
            <person name="Raddatz G."/>
            <person name="Lanz C."/>
            <person name="Keller H."/>
            <person name="Morelli G."/>
            <person name="Gressmann H."/>
            <person name="Achtman M."/>
            <person name="Schuster S.C."/>
        </authorList>
    </citation>
    <scope>NUCLEOTIDE SEQUENCE [LARGE SCALE GENOMIC DNA]</scope>
    <source>
        <strain>Sheeba</strain>
    </source>
</reference>
<evidence type="ECO:0000255" key="1">
    <source>
        <dbReference type="HAMAP-Rule" id="MF_01398"/>
    </source>
</evidence>
<organism>
    <name type="scientific">Helicobacter acinonychis (strain Sheeba)</name>
    <dbReference type="NCBI Taxonomy" id="382638"/>
    <lineage>
        <taxon>Bacteria</taxon>
        <taxon>Pseudomonadati</taxon>
        <taxon>Campylobacterota</taxon>
        <taxon>Epsilonproteobacteria</taxon>
        <taxon>Campylobacterales</taxon>
        <taxon>Helicobacteraceae</taxon>
        <taxon>Helicobacter</taxon>
    </lineage>
</organism>
<accession>Q17Y82</accession>
<comment type="function">
    <text evidence="1">F(1)F(0) ATP synthase produces ATP from ADP in the presence of a proton or sodium gradient. F-type ATPases consist of two structural domains, F(1) containing the extramembraneous catalytic core and F(0) containing the membrane proton channel, linked together by a central stalk and a peripheral stalk. During catalysis, ATP synthesis in the catalytic domain of F(1) is coupled via a rotary mechanism of the central stalk subunits to proton translocation.</text>
</comment>
<comment type="function">
    <text evidence="1">Component of the F(0) channel, it forms part of the peripheral stalk, linking F(1) to F(0).</text>
</comment>
<comment type="subunit">
    <text evidence="1">F-type ATPases have 2 components, F(1) - the catalytic core - and F(0) - the membrane proton channel. F(1) has five subunits: alpha(3), beta(3), gamma(1), delta(1), epsilon(1). F(0) has three main subunits: a(1), b(2) and c(10-14). The alpha and beta chains form an alternating ring which encloses part of the gamma chain. F(1) is attached to F(0) by a central stalk formed by the gamma and epsilon chains, while a peripheral stalk is formed by the delta and b chains.</text>
</comment>
<comment type="subcellular location">
    <subcellularLocation>
        <location evidence="1">Cell inner membrane</location>
        <topology evidence="1">Single-pass membrane protein</topology>
    </subcellularLocation>
</comment>
<comment type="similarity">
    <text evidence="1">Belongs to the ATPase B chain family.</text>
</comment>
<gene>
    <name evidence="1" type="primary">atpF</name>
    <name type="ordered locus">Hac_0578</name>
</gene>
<dbReference type="EMBL" id="AM260522">
    <property type="protein sequence ID" value="CAJ99394.1"/>
    <property type="molecule type" value="Genomic_DNA"/>
</dbReference>
<dbReference type="RefSeq" id="WP_011577508.1">
    <property type="nucleotide sequence ID" value="NC_008229.1"/>
</dbReference>
<dbReference type="SMR" id="Q17Y82"/>
<dbReference type="STRING" id="382638.Hac_0578"/>
<dbReference type="GeneID" id="31758055"/>
<dbReference type="KEGG" id="hac:Hac_0578"/>
<dbReference type="eggNOG" id="COG0711">
    <property type="taxonomic scope" value="Bacteria"/>
</dbReference>
<dbReference type="HOGENOM" id="CLU_129781_1_0_7"/>
<dbReference type="OrthoDB" id="5373033at2"/>
<dbReference type="BioCyc" id="HACI382638:HAC_RS02555-MONOMER"/>
<dbReference type="Proteomes" id="UP000000775">
    <property type="component" value="Chromosome"/>
</dbReference>
<dbReference type="GO" id="GO:0005886">
    <property type="term" value="C:plasma membrane"/>
    <property type="evidence" value="ECO:0007669"/>
    <property type="project" value="UniProtKB-SubCell"/>
</dbReference>
<dbReference type="GO" id="GO:0045259">
    <property type="term" value="C:proton-transporting ATP synthase complex"/>
    <property type="evidence" value="ECO:0007669"/>
    <property type="project" value="UniProtKB-KW"/>
</dbReference>
<dbReference type="GO" id="GO:0046933">
    <property type="term" value="F:proton-transporting ATP synthase activity, rotational mechanism"/>
    <property type="evidence" value="ECO:0007669"/>
    <property type="project" value="UniProtKB-UniRule"/>
</dbReference>
<dbReference type="CDD" id="cd06503">
    <property type="entry name" value="ATP-synt_Fo_b"/>
    <property type="match status" value="1"/>
</dbReference>
<dbReference type="Gene3D" id="1.20.5.620">
    <property type="entry name" value="F1F0 ATP synthase subunit B, membrane domain"/>
    <property type="match status" value="1"/>
</dbReference>
<dbReference type="HAMAP" id="MF_01398">
    <property type="entry name" value="ATP_synth_b_bprime"/>
    <property type="match status" value="1"/>
</dbReference>
<dbReference type="InterPro" id="IPR028987">
    <property type="entry name" value="ATP_synth_B-like_membr_sf"/>
</dbReference>
<dbReference type="InterPro" id="IPR002146">
    <property type="entry name" value="ATP_synth_b/b'su_bac/chlpt"/>
</dbReference>
<dbReference type="NCBIfam" id="NF006292">
    <property type="entry name" value="PRK08475.1"/>
    <property type="match status" value="1"/>
</dbReference>
<dbReference type="Pfam" id="PF00430">
    <property type="entry name" value="ATP-synt_B"/>
    <property type="match status" value="1"/>
</dbReference>
<dbReference type="SUPFAM" id="SSF81573">
    <property type="entry name" value="F1F0 ATP synthase subunit B, membrane domain"/>
    <property type="match status" value="1"/>
</dbReference>
<feature type="chain" id="PRO_0000368519" description="ATP synthase subunit b">
    <location>
        <begin position="1"/>
        <end position="171"/>
    </location>
</feature>
<feature type="transmembrane region" description="Helical" evidence="1">
    <location>
        <begin position="2"/>
        <end position="22"/>
    </location>
</feature>
<sequence length="171" mass="19785">MVLVKMALGFLILLSPLCAMELDISQTDIIERSLNFLLFVGILWYFLAKKLRSFLHAKSLEISKHLDEIQAQLKASKENKKKLLKELEQAKEKAELIVSDANKEAYTITQKYELQTKIDVENLIKNSKALMDLEVKKIKRELVESVFKDLRESKKVSFSTQDCVNILKQRL</sequence>
<protein>
    <recommendedName>
        <fullName evidence="1">ATP synthase subunit b</fullName>
    </recommendedName>
    <alternativeName>
        <fullName evidence="1">ATP synthase F(0) sector subunit b</fullName>
    </alternativeName>
    <alternativeName>
        <fullName evidence="1">ATPase subunit I</fullName>
    </alternativeName>
    <alternativeName>
        <fullName evidence="1">F-type ATPase subunit b</fullName>
        <shortName evidence="1">F-ATPase subunit b</shortName>
    </alternativeName>
</protein>
<keyword id="KW-0066">ATP synthesis</keyword>
<keyword id="KW-0997">Cell inner membrane</keyword>
<keyword id="KW-1003">Cell membrane</keyword>
<keyword id="KW-0138">CF(0)</keyword>
<keyword id="KW-0375">Hydrogen ion transport</keyword>
<keyword id="KW-0406">Ion transport</keyword>
<keyword id="KW-0472">Membrane</keyword>
<keyword id="KW-0812">Transmembrane</keyword>
<keyword id="KW-1133">Transmembrane helix</keyword>
<keyword id="KW-0813">Transport</keyword>
<proteinExistence type="inferred from homology"/>
<name>ATPF_HELAH</name>